<name>ATPF_LEGPA</name>
<proteinExistence type="inferred from homology"/>
<organism>
    <name type="scientific">Legionella pneumophila (strain Paris)</name>
    <dbReference type="NCBI Taxonomy" id="297246"/>
    <lineage>
        <taxon>Bacteria</taxon>
        <taxon>Pseudomonadati</taxon>
        <taxon>Pseudomonadota</taxon>
        <taxon>Gammaproteobacteria</taxon>
        <taxon>Legionellales</taxon>
        <taxon>Legionellaceae</taxon>
        <taxon>Legionella</taxon>
    </lineage>
</organism>
<keyword id="KW-0066">ATP synthesis</keyword>
<keyword id="KW-0997">Cell inner membrane</keyword>
<keyword id="KW-1003">Cell membrane</keyword>
<keyword id="KW-0138">CF(0)</keyword>
<keyword id="KW-0375">Hydrogen ion transport</keyword>
<keyword id="KW-0406">Ion transport</keyword>
<keyword id="KW-0472">Membrane</keyword>
<keyword id="KW-0812">Transmembrane</keyword>
<keyword id="KW-1133">Transmembrane helix</keyword>
<keyword id="KW-0813">Transport</keyword>
<feature type="chain" id="PRO_0000368555" description="ATP synthase subunit b">
    <location>
        <begin position="1"/>
        <end position="156"/>
    </location>
</feature>
<feature type="transmembrane region" description="Helical" evidence="1">
    <location>
        <begin position="5"/>
        <end position="25"/>
    </location>
</feature>
<dbReference type="EMBL" id="CR628336">
    <property type="protein sequence ID" value="CAH14210.1"/>
    <property type="molecule type" value="Genomic_DNA"/>
</dbReference>
<dbReference type="RefSeq" id="WP_010948670.1">
    <property type="nucleotide sequence ID" value="NC_006368.1"/>
</dbReference>
<dbReference type="SMR" id="Q5X0N9"/>
<dbReference type="KEGG" id="lpp:lpp3057"/>
<dbReference type="LegioList" id="lpp3057"/>
<dbReference type="HOGENOM" id="CLU_079215_4_5_6"/>
<dbReference type="GO" id="GO:0005886">
    <property type="term" value="C:plasma membrane"/>
    <property type="evidence" value="ECO:0007669"/>
    <property type="project" value="UniProtKB-SubCell"/>
</dbReference>
<dbReference type="GO" id="GO:0045259">
    <property type="term" value="C:proton-transporting ATP synthase complex"/>
    <property type="evidence" value="ECO:0007669"/>
    <property type="project" value="UniProtKB-KW"/>
</dbReference>
<dbReference type="GO" id="GO:0046933">
    <property type="term" value="F:proton-transporting ATP synthase activity, rotational mechanism"/>
    <property type="evidence" value="ECO:0007669"/>
    <property type="project" value="UniProtKB-UniRule"/>
</dbReference>
<dbReference type="GO" id="GO:0046961">
    <property type="term" value="F:proton-transporting ATPase activity, rotational mechanism"/>
    <property type="evidence" value="ECO:0007669"/>
    <property type="project" value="TreeGrafter"/>
</dbReference>
<dbReference type="CDD" id="cd06503">
    <property type="entry name" value="ATP-synt_Fo_b"/>
    <property type="match status" value="1"/>
</dbReference>
<dbReference type="Gene3D" id="6.10.250.1580">
    <property type="match status" value="1"/>
</dbReference>
<dbReference type="HAMAP" id="MF_01398">
    <property type="entry name" value="ATP_synth_b_bprime"/>
    <property type="match status" value="1"/>
</dbReference>
<dbReference type="InterPro" id="IPR028987">
    <property type="entry name" value="ATP_synth_B-like_membr_sf"/>
</dbReference>
<dbReference type="InterPro" id="IPR002146">
    <property type="entry name" value="ATP_synth_b/b'su_bac/chlpt"/>
</dbReference>
<dbReference type="InterPro" id="IPR005864">
    <property type="entry name" value="ATP_synth_F0_bsu_bac"/>
</dbReference>
<dbReference type="InterPro" id="IPR050059">
    <property type="entry name" value="ATP_synthase_B_chain"/>
</dbReference>
<dbReference type="NCBIfam" id="TIGR01144">
    <property type="entry name" value="ATP_synt_b"/>
    <property type="match status" value="1"/>
</dbReference>
<dbReference type="NCBIfam" id="NF004411">
    <property type="entry name" value="PRK05759.1-2"/>
    <property type="match status" value="1"/>
</dbReference>
<dbReference type="PANTHER" id="PTHR33445:SF1">
    <property type="entry name" value="ATP SYNTHASE SUBUNIT B"/>
    <property type="match status" value="1"/>
</dbReference>
<dbReference type="PANTHER" id="PTHR33445">
    <property type="entry name" value="ATP SYNTHASE SUBUNIT B', CHLOROPLASTIC"/>
    <property type="match status" value="1"/>
</dbReference>
<dbReference type="Pfam" id="PF00430">
    <property type="entry name" value="ATP-synt_B"/>
    <property type="match status" value="1"/>
</dbReference>
<dbReference type="SUPFAM" id="SSF81573">
    <property type="entry name" value="F1F0 ATP synthase subunit B, membrane domain"/>
    <property type="match status" value="1"/>
</dbReference>
<evidence type="ECO:0000255" key="1">
    <source>
        <dbReference type="HAMAP-Rule" id="MF_01398"/>
    </source>
</evidence>
<gene>
    <name evidence="1" type="primary">atpF</name>
    <name type="ordered locus">lpp3057</name>
</gene>
<comment type="function">
    <text evidence="1">F(1)F(0) ATP synthase produces ATP from ADP in the presence of a proton or sodium gradient. F-type ATPases consist of two structural domains, F(1) containing the extramembraneous catalytic core and F(0) containing the membrane proton channel, linked together by a central stalk and a peripheral stalk. During catalysis, ATP synthesis in the catalytic domain of F(1) is coupled via a rotary mechanism of the central stalk subunits to proton translocation.</text>
</comment>
<comment type="function">
    <text evidence="1">Component of the F(0) channel, it forms part of the peripheral stalk, linking F(1) to F(0).</text>
</comment>
<comment type="subunit">
    <text evidence="1">F-type ATPases have 2 components, F(1) - the catalytic core - and F(0) - the membrane proton channel. F(1) has five subunits: alpha(3), beta(3), gamma(1), delta(1), epsilon(1). F(0) has three main subunits: a(1), b(2) and c(10-14). The alpha and beta chains form an alternating ring which encloses part of the gamma chain. F(1) is attached to F(0) by a central stalk formed by the gamma and epsilon chains, while a peripheral stalk is formed by the delta and b chains.</text>
</comment>
<comment type="subcellular location">
    <subcellularLocation>
        <location evidence="1">Cell inner membrane</location>
        <topology evidence="1">Single-pass membrane protein</topology>
    </subcellularLocation>
</comment>
<comment type="similarity">
    <text evidence="1">Belongs to the ATPase B chain family.</text>
</comment>
<reference key="1">
    <citation type="journal article" date="2004" name="Nat. Genet.">
        <title>Evidence in the Legionella pneumophila genome for exploitation of host cell functions and high genome plasticity.</title>
        <authorList>
            <person name="Cazalet C."/>
            <person name="Rusniok C."/>
            <person name="Brueggemann H."/>
            <person name="Zidane N."/>
            <person name="Magnier A."/>
            <person name="Ma L."/>
            <person name="Tichit M."/>
            <person name="Jarraud S."/>
            <person name="Bouchier C."/>
            <person name="Vandenesch F."/>
            <person name="Kunst F."/>
            <person name="Etienne J."/>
            <person name="Glaser P."/>
            <person name="Buchrieser C."/>
        </authorList>
    </citation>
    <scope>NUCLEOTIDE SEQUENCE [LARGE SCALE GENOMIC DNA]</scope>
    <source>
        <strain>Paris</strain>
    </source>
</reference>
<accession>Q5X0N9</accession>
<protein>
    <recommendedName>
        <fullName evidence="1">ATP synthase subunit b</fullName>
    </recommendedName>
    <alternativeName>
        <fullName evidence="1">ATP synthase F(0) sector subunit b</fullName>
    </alternativeName>
    <alternativeName>
        <fullName evidence="1">ATPase subunit I</fullName>
    </alternativeName>
    <alternativeName>
        <fullName evidence="1">F-type ATPase subunit b</fullName>
        <shortName evidence="1">F-ATPase subunit b</shortName>
    </alternativeName>
</protein>
<sequence>MDINLTLIVQMLVFAAFVLFTMKLVWPPLAKALEERQDKIADGLAAAERGRKELELAQHRVKDELKQAKAHSADIIDKANKRASEIIEAAKEAAKREAQIQAKLAQEQIAQQVNHAKEELRKQVAKLAITGAEKILMREVDAKANSELLDNLIEEI</sequence>